<organism>
    <name type="scientific">Ochrosphaera neapolitana</name>
    <dbReference type="NCBI Taxonomy" id="35137"/>
    <lineage>
        <taxon>Eukaryota</taxon>
        <taxon>Haptista</taxon>
        <taxon>Haptophyta</taxon>
        <taxon>Prymnesiophyceae</taxon>
        <taxon>Coccolithales</taxon>
        <taxon>Hymenomonadaceae</taxon>
        <taxon>Ochrosphaera</taxon>
    </lineage>
</organism>
<keyword id="KW-0066">ATP synthesis</keyword>
<keyword id="KW-0067">ATP-binding</keyword>
<keyword id="KW-0138">CF(0)</keyword>
<keyword id="KW-0150">Chloroplast</keyword>
<keyword id="KW-0375">Hydrogen ion transport</keyword>
<keyword id="KW-0406">Ion transport</keyword>
<keyword id="KW-0472">Membrane</keyword>
<keyword id="KW-0547">Nucleotide-binding</keyword>
<keyword id="KW-0934">Plastid</keyword>
<keyword id="KW-0793">Thylakoid</keyword>
<keyword id="KW-0812">Transmembrane</keyword>
<keyword id="KW-1133">Transmembrane helix</keyword>
<keyword id="KW-0813">Transport</keyword>
<dbReference type="EMBL" id="X99078">
    <property type="protein sequence ID" value="CAA67538.1"/>
    <property type="molecule type" value="Genomic_DNA"/>
</dbReference>
<dbReference type="RefSeq" id="YP_010930363.1">
    <property type="nucleotide sequence ID" value="NC_082037.1"/>
</dbReference>
<dbReference type="SMR" id="Q40609"/>
<dbReference type="GeneID" id="84345453"/>
<dbReference type="GO" id="GO:0009535">
    <property type="term" value="C:chloroplast thylakoid membrane"/>
    <property type="evidence" value="ECO:0007669"/>
    <property type="project" value="UniProtKB-SubCell"/>
</dbReference>
<dbReference type="GO" id="GO:0045259">
    <property type="term" value="C:proton-transporting ATP synthase complex"/>
    <property type="evidence" value="ECO:0007669"/>
    <property type="project" value="UniProtKB-KW"/>
</dbReference>
<dbReference type="GO" id="GO:0005524">
    <property type="term" value="F:ATP binding"/>
    <property type="evidence" value="ECO:0007669"/>
    <property type="project" value="UniProtKB-KW"/>
</dbReference>
<dbReference type="GO" id="GO:0046933">
    <property type="term" value="F:proton-transporting ATP synthase activity, rotational mechanism"/>
    <property type="evidence" value="ECO:0007669"/>
    <property type="project" value="UniProtKB-UniRule"/>
</dbReference>
<dbReference type="CDD" id="cd06503">
    <property type="entry name" value="ATP-synt_Fo_b"/>
    <property type="match status" value="1"/>
</dbReference>
<dbReference type="HAMAP" id="MF_01398">
    <property type="entry name" value="ATP_synth_b_bprime"/>
    <property type="match status" value="1"/>
</dbReference>
<dbReference type="InterPro" id="IPR002146">
    <property type="entry name" value="ATP_synth_b/b'su_bac/chlpt"/>
</dbReference>
<dbReference type="NCBIfam" id="NF005606">
    <property type="entry name" value="PRK07352.1"/>
    <property type="match status" value="1"/>
</dbReference>
<dbReference type="PANTHER" id="PTHR34264">
    <property type="entry name" value="ATP SYNTHASE SUBUNIT B, CHLOROPLASTIC"/>
    <property type="match status" value="1"/>
</dbReference>
<dbReference type="PANTHER" id="PTHR34264:SF3">
    <property type="entry name" value="ATP SYNTHASE SUBUNIT B, CHLOROPLASTIC"/>
    <property type="match status" value="1"/>
</dbReference>
<dbReference type="Pfam" id="PF00430">
    <property type="entry name" value="ATP-synt_B"/>
    <property type="match status" value="1"/>
</dbReference>
<accession>Q40609</accession>
<geneLocation type="chloroplast"/>
<name>ATPF_OCHNE</name>
<feature type="chain" id="PRO_0000082415" description="ATP synthase subunit b, chloroplastic">
    <location>
        <begin position="1"/>
        <end position="178"/>
    </location>
</feature>
<feature type="transmembrane region" description="Helical" evidence="1">
    <location>
        <begin position="34"/>
        <end position="50"/>
    </location>
</feature>
<reference key="1">
    <citation type="submission" date="1996-07" db="EMBL/GenBank/DDBJ databases">
        <title>Plastid genome size and heterogeneous base composition of nuclear DNA from Ochrosphaera neapolitana (Prymnesiophyta).</title>
        <authorList>
            <person name="Huss V.A.R."/>
            <person name="Tietze A.C."/>
            <person name="Julius C."/>
        </authorList>
    </citation>
    <scope>NUCLEOTIDE SEQUENCE [GENOMIC DNA]</scope>
    <source>
        <strain>CCMP593 / OCHRO / Plymouth163</strain>
    </source>
</reference>
<sequence>MHLFTQTLVRFSSLIADGGVSFNPDIFETNVVNLAILTGGIFYLGSNALSESLVERQQKILGAIQEAEERLEQATERLKESKTQLEQAQLVIASIKEDAETTAKQVKSAILTEGKNEIERLTSAAKSQIVTIEAQVRKQISDYVVSLALQRVTLQLEGKLSDAAQQQILDRNISKLKD</sequence>
<gene>
    <name evidence="1" type="primary">atpF</name>
</gene>
<comment type="function">
    <text evidence="1">F(1)F(0) ATP synthase produces ATP from ADP in the presence of a proton or sodium gradient. F-type ATPases consist of two structural domains, F(1) containing the extramembraneous catalytic core and F(0) containing the membrane proton channel, linked together by a central stalk and a peripheral stalk. During catalysis, ATP synthesis in the catalytic domain of F(1) is coupled via a rotary mechanism of the central stalk subunits to proton translocation.</text>
</comment>
<comment type="function">
    <text evidence="1">Component of the F(0) channel, it forms part of the peripheral stalk, linking F(1) to F(0).</text>
</comment>
<comment type="subunit">
    <text evidence="1">F-type ATPases have 2 components, F(1) - the catalytic core - and F(0) - the membrane proton channel. F(1) has five subunits: alpha(3), beta(3), gamma(1), delta(1), epsilon(1). F(0) has four main subunits: a(1), b(1), b'(1) and c(10-14). The alpha and beta chains form an alternating ring which encloses part of the gamma chain. F(1) is attached to F(0) by a central stalk formed by the gamma and epsilon chains, while a peripheral stalk is formed by the delta, b and b' chains.</text>
</comment>
<comment type="subcellular location">
    <subcellularLocation>
        <location evidence="1">Plastid</location>
        <location evidence="1">Chloroplast thylakoid membrane</location>
        <topology evidence="1">Single-pass membrane protein</topology>
    </subcellularLocation>
</comment>
<comment type="miscellaneous">
    <text>In plastids the F-type ATPase is also known as CF(1)CF(0).</text>
</comment>
<comment type="similarity">
    <text evidence="1">Belongs to the ATPase B chain family.</text>
</comment>
<protein>
    <recommendedName>
        <fullName evidence="1">ATP synthase subunit b, chloroplastic</fullName>
    </recommendedName>
    <alternativeName>
        <fullName evidence="1">ATP synthase F(0) sector subunit b</fullName>
    </alternativeName>
    <alternativeName>
        <fullName evidence="1">ATPase subunit I</fullName>
    </alternativeName>
</protein>
<evidence type="ECO:0000255" key="1">
    <source>
        <dbReference type="HAMAP-Rule" id="MF_01398"/>
    </source>
</evidence>
<proteinExistence type="inferred from homology"/>